<name>NRAM_I72A1</name>
<keyword id="KW-0106">Calcium</keyword>
<keyword id="KW-1015">Disulfide bond</keyword>
<keyword id="KW-0325">Glycoprotein</keyword>
<keyword id="KW-0326">Glycosidase</keyword>
<keyword id="KW-1032">Host cell membrane</keyword>
<keyword id="KW-1043">Host membrane</keyword>
<keyword id="KW-0378">Hydrolase</keyword>
<keyword id="KW-0472">Membrane</keyword>
<keyword id="KW-0479">Metal-binding</keyword>
<keyword id="KW-0735">Signal-anchor</keyword>
<keyword id="KW-0812">Transmembrane</keyword>
<keyword id="KW-1133">Transmembrane helix</keyword>
<keyword id="KW-0946">Virion</keyword>
<dbReference type="EC" id="3.2.1.18" evidence="1"/>
<dbReference type="EMBL" id="L06573">
    <property type="protein sequence ID" value="AAA43367.1"/>
    <property type="molecule type" value="Genomic_RNA"/>
</dbReference>
<dbReference type="SMR" id="Q07571"/>
<dbReference type="CAZy" id="GH34">
    <property type="family name" value="Glycoside Hydrolase Family 34"/>
</dbReference>
<dbReference type="GlyCosmos" id="Q07571">
    <property type="glycosylation" value="7 sites, No reported glycans"/>
</dbReference>
<dbReference type="GO" id="GO:0020002">
    <property type="term" value="C:host cell plasma membrane"/>
    <property type="evidence" value="ECO:0007669"/>
    <property type="project" value="UniProtKB-SubCell"/>
</dbReference>
<dbReference type="GO" id="GO:0016020">
    <property type="term" value="C:membrane"/>
    <property type="evidence" value="ECO:0007669"/>
    <property type="project" value="UniProtKB-UniRule"/>
</dbReference>
<dbReference type="GO" id="GO:0055036">
    <property type="term" value="C:virion membrane"/>
    <property type="evidence" value="ECO:0007669"/>
    <property type="project" value="UniProtKB-SubCell"/>
</dbReference>
<dbReference type="GO" id="GO:0004308">
    <property type="term" value="F:exo-alpha-sialidase activity"/>
    <property type="evidence" value="ECO:0007669"/>
    <property type="project" value="UniProtKB-UniRule"/>
</dbReference>
<dbReference type="GO" id="GO:0046872">
    <property type="term" value="F:metal ion binding"/>
    <property type="evidence" value="ECO:0007669"/>
    <property type="project" value="UniProtKB-UniRule"/>
</dbReference>
<dbReference type="GO" id="GO:0005975">
    <property type="term" value="P:carbohydrate metabolic process"/>
    <property type="evidence" value="ECO:0007669"/>
    <property type="project" value="InterPro"/>
</dbReference>
<dbReference type="GO" id="GO:0046761">
    <property type="term" value="P:viral budding from plasma membrane"/>
    <property type="evidence" value="ECO:0007669"/>
    <property type="project" value="UniProtKB-UniRule"/>
</dbReference>
<dbReference type="Gene3D" id="2.120.10.10">
    <property type="match status" value="1"/>
</dbReference>
<dbReference type="HAMAP" id="MF_04071">
    <property type="entry name" value="INFV_NRAM"/>
    <property type="match status" value="1"/>
</dbReference>
<dbReference type="InterPro" id="IPR001860">
    <property type="entry name" value="Glyco_hydro_34"/>
</dbReference>
<dbReference type="InterPro" id="IPR036278">
    <property type="entry name" value="Sialidase_sf"/>
</dbReference>
<dbReference type="Pfam" id="PF00064">
    <property type="entry name" value="Neur"/>
    <property type="match status" value="1"/>
</dbReference>
<dbReference type="SUPFAM" id="SSF50939">
    <property type="entry name" value="Sialidases"/>
    <property type="match status" value="1"/>
</dbReference>
<comment type="function">
    <text evidence="1">Catalyzes the removal of terminal sialic acid residues from viral and cellular glycoconjugates. Cleaves off the terminal sialic acids on the glycosylated HA during virus budding to facilitate virus release. Additionally helps virus spread through the circulation by further removing sialic acids from the cell surface. These cleavages prevent self-aggregation and ensure the efficient spread of the progeny virus from cell to cell. Otherwise, infection would be limited to one round of replication. Described as a receptor-destroying enzyme because it cleaves a terminal sialic acid from the cellular receptors. May facilitate viral invasion of the upper airways by cleaving the sialic acid moieties on the mucin of the airway epithelial cells. Likely to plays a role in the budding process through its association with lipid rafts during intracellular transport. May additionally display a raft-association independent effect on budding. Plays a role in the determination of host range restriction on replication and virulence. Sialidase activity in late endosome/lysosome traffic seems to enhance virus replication.</text>
</comment>
<comment type="catalytic activity">
    <reaction evidence="1">
        <text>Hydrolysis of alpha-(2-&gt;3)-, alpha-(2-&gt;6)-, alpha-(2-&gt;8)- glycosidic linkages of terminal sialic acid residues in oligosaccharides, glycoproteins, glycolipids, colominic acid and synthetic substrates.</text>
        <dbReference type="EC" id="3.2.1.18"/>
    </reaction>
</comment>
<comment type="cofactor">
    <cofactor evidence="1">
        <name>Ca(2+)</name>
        <dbReference type="ChEBI" id="CHEBI:29108"/>
    </cofactor>
</comment>
<comment type="activity regulation">
    <text evidence="1">Inhibited by the neuraminidase inhibitors zanamivir (Relenza) and oseltamivir (Tamiflu). These drugs interfere with the release of progeny virus from infected cells and are effective against all influenza strains. Resistance to neuraminidase inhibitors is quite rare.</text>
</comment>
<comment type="subunit">
    <text evidence="1">Homotetramer.</text>
</comment>
<comment type="subcellular location">
    <subcellularLocation>
        <location evidence="1">Virion membrane</location>
    </subcellularLocation>
    <subcellularLocation>
        <location evidence="1">Host apical cell membrane</location>
        <topology evidence="1">Single-pass type II membrane protein</topology>
    </subcellularLocation>
    <text evidence="1">Preferentially accumulates at the apical plasma membrane in infected polarized epithelial cells, which is the virus assembly site. Uses lipid rafts for cell surface transport and apical sorting. In the virion, forms a mushroom-shaped spike on the surface of the membrane.</text>
</comment>
<comment type="domain">
    <text evidence="1">Intact N-terminus is essential for virion morphogenesis. Possesses two apical sorting signals, one in the ectodomain, which is likely to be a glycan, and the other in the transmembrane domain. The transmembrane domain also plays a role in lipid raft association.</text>
</comment>
<comment type="PTM">
    <text evidence="1">N-glycosylated.</text>
</comment>
<comment type="miscellaneous">
    <text>The influenza A genome consist of 8 RNA segments. Genetic variation of hemagglutinin and/or neuraminidase genes results in the emergence of new influenza strains. The mechanism of variation can be the result of point mutations or the result of genetic reassortment between segments of two different strains.</text>
</comment>
<comment type="similarity">
    <text evidence="1">Belongs to the glycosyl hydrolase 34 family.</text>
</comment>
<feature type="chain" id="PRO_0000078684" description="Neuraminidase">
    <location>
        <begin position="1"/>
        <end position="470"/>
    </location>
</feature>
<feature type="topological domain" description="Intravirion" evidence="1">
    <location>
        <begin position="1"/>
        <end position="14"/>
    </location>
</feature>
<feature type="transmembrane region" description="Helical" evidence="1">
    <location>
        <begin position="15"/>
        <end position="35"/>
    </location>
</feature>
<feature type="topological domain" description="Virion surface" evidence="1">
    <location>
        <begin position="36"/>
        <end position="470"/>
    </location>
</feature>
<feature type="region of interest" description="Involved in apical transport and lipid raft association" evidence="1">
    <location>
        <begin position="11"/>
        <end position="32"/>
    </location>
</feature>
<feature type="region of interest" description="Hypervariable stalk region" evidence="1">
    <location>
        <begin position="32"/>
        <end position="86"/>
    </location>
</feature>
<feature type="region of interest" description="Head of neuraminidase" evidence="1">
    <location>
        <begin position="89"/>
        <end position="470"/>
    </location>
</feature>
<feature type="active site" description="Proton donor/acceptor" evidence="1">
    <location>
        <position position="149"/>
    </location>
</feature>
<feature type="active site" description="Nucleophile" evidence="1">
    <location>
        <position position="402"/>
    </location>
</feature>
<feature type="binding site" evidence="1">
    <location>
        <position position="116"/>
    </location>
    <ligand>
        <name>substrate</name>
    </ligand>
</feature>
<feature type="binding site" evidence="1">
    <location>
        <position position="150"/>
    </location>
    <ligand>
        <name>substrate</name>
    </ligand>
</feature>
<feature type="binding site" evidence="1">
    <location>
        <begin position="275"/>
        <end position="276"/>
    </location>
    <ligand>
        <name>substrate</name>
    </ligand>
</feature>
<feature type="binding site" evidence="1">
    <location>
        <position position="291"/>
    </location>
    <ligand>
        <name>substrate</name>
    </ligand>
</feature>
<feature type="binding site" evidence="1">
    <location>
        <position position="292"/>
    </location>
    <ligand>
        <name>Ca(2+)</name>
        <dbReference type="ChEBI" id="CHEBI:29108"/>
    </ligand>
</feature>
<feature type="binding site" evidence="1">
    <location>
        <position position="296"/>
    </location>
    <ligand>
        <name>Ca(2+)</name>
        <dbReference type="ChEBI" id="CHEBI:29108"/>
    </ligand>
</feature>
<feature type="binding site" evidence="1">
    <location>
        <position position="322"/>
    </location>
    <ligand>
        <name>Ca(2+)</name>
        <dbReference type="ChEBI" id="CHEBI:29108"/>
    </ligand>
</feature>
<feature type="binding site" evidence="1">
    <location>
        <position position="368"/>
    </location>
    <ligand>
        <name>substrate</name>
    </ligand>
</feature>
<feature type="glycosylation site" description="N-linked (GlcNAc...) asparagine; by host" evidence="1">
    <location>
        <position position="46"/>
    </location>
</feature>
<feature type="glycosylation site" description="N-linked (GlcNAc...) asparagine; by host" evidence="1">
    <location>
        <position position="54"/>
    </location>
</feature>
<feature type="glycosylation site" description="N-linked (GlcNAc...) asparagine; by host" evidence="1">
    <location>
        <position position="67"/>
    </location>
</feature>
<feature type="glycosylation site" description="N-linked (GlcNAc...) asparagine; by host" evidence="1">
    <location>
        <position position="84"/>
    </location>
</feature>
<feature type="glycosylation site" description="N-linked (GlcNAc...) asparagine; by host" evidence="1">
    <location>
        <position position="144"/>
    </location>
</feature>
<feature type="glycosylation site" description="N-linked (GlcNAc...) asparagine; by host" evidence="1">
    <location>
        <position position="293"/>
    </location>
</feature>
<feature type="glycosylation site" description="N-linked (GlcNAc...) asparagine; by host" evidence="1">
    <location>
        <position position="398"/>
    </location>
</feature>
<feature type="disulfide bond" evidence="1">
    <location>
        <begin position="90"/>
        <end position="417"/>
    </location>
</feature>
<feature type="disulfide bond" evidence="1">
    <location>
        <begin position="122"/>
        <end position="127"/>
    </location>
</feature>
<feature type="disulfide bond" evidence="1">
    <location>
        <begin position="182"/>
        <end position="229"/>
    </location>
</feature>
<feature type="disulfide bond" evidence="1">
    <location>
        <begin position="231"/>
        <end position="236"/>
    </location>
</feature>
<feature type="disulfide bond" evidence="1">
    <location>
        <begin position="277"/>
        <end position="290"/>
    </location>
</feature>
<feature type="disulfide bond" evidence="1">
    <location>
        <begin position="279"/>
        <end position="288"/>
    </location>
</feature>
<feature type="disulfide bond" evidence="1">
    <location>
        <begin position="316"/>
        <end position="335"/>
    </location>
</feature>
<feature type="disulfide bond" evidence="1">
    <location>
        <begin position="421"/>
        <end position="446"/>
    </location>
</feature>
<proteinExistence type="inferred from homology"/>
<evidence type="ECO:0000255" key="1">
    <source>
        <dbReference type="HAMAP-Rule" id="MF_04071"/>
    </source>
</evidence>
<gene>
    <name evidence="1" type="primary">NA</name>
</gene>
<accession>Q07571</accession>
<sequence length="470" mass="52070">MNPNQKIITIGSISLGLVVFNVLLHVVSIIVTVLILGRGGNNGICNETVVREYNETVRIEKVTQWHNTSVVEYMPYWNEGTYMNNTEAICDVKGFAPFSKDNGIRIGSRGHVFVIREPFVSCSPTECRTFFLTQGSLLNDKHSNGTVKDRSPFRTLMSVEVGQSPNVYQARFEAVAWSATACHDGKKWMTVGVTGPDSKAVAVVHYGGVPTDVVNSWAGDILRTQESSCTCIQGDCYWVMTDGPANRQAQYRIYKANQGKIVGQTDVSFNGGHIEECSCYPNDGKVECVCRDNWTGTNRPVLVISPDLAYRVGYLCAGLPSDTPRGEDAQFTGSCTSPMGNQGYGVKGFGFRQGTDVWMGRTISRTSRSGFEILRVRNGWTQTSKEQVRKQVVVDNLNWSGYSGSFTLPVELSGKYCLVPCFWVEMIRGKPEEKTIWTSSSSIVMCGVDYEVADWSWHDGAILPFDIDKM</sequence>
<reference key="1">
    <citation type="journal article" date="1993" name="Virology">
        <title>Phylogenetic analysis of the N8 neuraminidase gene of influenza A viruses.</title>
        <authorList>
            <person name="Saito T."/>
            <person name="Kawaoka Y."/>
            <person name="Webster R.G."/>
        </authorList>
    </citation>
    <scope>NUCLEOTIDE SEQUENCE [GENOMIC RNA]</scope>
</reference>
<reference key="2">
    <citation type="journal article" date="2004" name="Virus Res.">
        <title>Assembly and budding of influenza virus.</title>
        <authorList>
            <person name="Nayak D.P."/>
            <person name="Hui E.K."/>
            <person name="Barman S."/>
        </authorList>
    </citation>
    <scope>REVIEW</scope>
</reference>
<reference key="3">
    <citation type="journal article" date="2005" name="N. Engl. J. Med.">
        <title>Neuraminidase inhibitors for influenza.</title>
        <authorList>
            <person name="Moscona A."/>
        </authorList>
    </citation>
    <scope>REVIEW</scope>
</reference>
<reference key="4">
    <citation type="journal article" date="2005" name="Biol. Pharm. Bull.">
        <title>Sialobiology of influenza: molecular mechanism of host range variation of influenza viruses.</title>
        <authorList>
            <person name="Suzuki Y."/>
        </authorList>
    </citation>
    <scope>REVIEW</scope>
</reference>
<organismHost>
    <name type="scientific">Aves</name>
    <dbReference type="NCBI Taxonomy" id="8782"/>
</organismHost>
<organismHost>
    <name type="scientific">Equus caballus</name>
    <name type="common">Horse</name>
    <dbReference type="NCBI Taxonomy" id="9796"/>
</organismHost>
<organism>
    <name type="scientific">Influenza A virus (strain A/Duck/Chabarovsk/1610/1972 H3N8)</name>
    <dbReference type="NCBI Taxonomy" id="387205"/>
    <lineage>
        <taxon>Viruses</taxon>
        <taxon>Riboviria</taxon>
        <taxon>Orthornavirae</taxon>
        <taxon>Negarnaviricota</taxon>
        <taxon>Polyploviricotina</taxon>
        <taxon>Insthoviricetes</taxon>
        <taxon>Articulavirales</taxon>
        <taxon>Orthomyxoviridae</taxon>
        <taxon>Alphainfluenzavirus</taxon>
        <taxon>Alphainfluenzavirus influenzae</taxon>
        <taxon>Influenza A virus</taxon>
    </lineage>
</organism>
<protein>
    <recommendedName>
        <fullName evidence="1">Neuraminidase</fullName>
        <ecNumber evidence="1">3.2.1.18</ecNumber>
    </recommendedName>
</protein>